<accession>A8S6B6</accession>
<evidence type="ECO:0000250" key="1"/>
<evidence type="ECO:0000255" key="2"/>
<evidence type="ECO:0000255" key="3">
    <source>
        <dbReference type="PROSITE-ProRule" id="PRU01005"/>
    </source>
</evidence>
<evidence type="ECO:0000305" key="4"/>
<reference key="1">
    <citation type="submission" date="2007-05" db="EMBL/GenBank/DDBJ databases">
        <title>Identification and comparative analysis of venom gland specific genes from the Australian copperhead snake (Austrelaps suberbus).</title>
        <authorList>
            <person name="St Pierre L."/>
        </authorList>
    </citation>
    <scope>NUCLEOTIDE SEQUENCE [MRNA]</scope>
</reference>
<name>CRVP_AUSSU</name>
<proteinExistence type="evidence at transcript level"/>
<sequence length="238" mass="26387">MIAFIVLLSLAAVLQQSSGTVDFASESSNKKDYRKEIVDKHNALRRSVKPTARNMLRMEWNSRAAQNAKRWADRCTFAHSPPHTRTVGKLRCGENIFMSTQPFAWSGVVQAWYDEVKKFVYGIGAKPPGSVIGHYTQVVWYKSHLLGCASAKCSSTKYLYVCQYCPAGNIRGSIATPYKSGPACGDCPSACVNGLCTNPCKYEDAFTNCKALAKKTKCKTEWIKSKCPATCFCHNKII</sequence>
<keyword id="KW-0108">Calcium channel impairing toxin</keyword>
<keyword id="KW-1015">Disulfide bond</keyword>
<keyword id="KW-0872">Ion channel impairing toxin</keyword>
<keyword id="KW-0528">Neurotoxin</keyword>
<keyword id="KW-0964">Secreted</keyword>
<keyword id="KW-0732">Signal</keyword>
<keyword id="KW-0800">Toxin</keyword>
<comment type="function">
    <text evidence="1">Blocks contraction of smooth muscle elicited by high potassium-induced depolarization, but does not block caffeine-stimulated contraction. May target voltage-gated calcium channels on smooth muscle (By similarity).</text>
</comment>
<comment type="subcellular location">
    <subcellularLocation>
        <location evidence="1">Secreted</location>
    </subcellularLocation>
</comment>
<comment type="tissue specificity">
    <text>Expressed by the venom gland.</text>
</comment>
<comment type="similarity">
    <text evidence="4">Belongs to the CRISP family.</text>
</comment>
<feature type="signal peptide" evidence="2">
    <location>
        <begin position="1"/>
        <end position="19"/>
    </location>
</feature>
<feature type="chain" id="PRO_5000282348" description="Cysteine-rich venom protein">
    <location>
        <begin position="20"/>
        <end position="238"/>
    </location>
</feature>
<feature type="domain" description="SCP">
    <location>
        <begin position="38"/>
        <end position="164"/>
    </location>
</feature>
<feature type="domain" description="ShKT" evidence="3">
    <location>
        <begin position="200"/>
        <end position="233"/>
    </location>
</feature>
<feature type="disulfide bond" evidence="3">
    <location>
        <begin position="75"/>
        <end position="153"/>
    </location>
</feature>
<feature type="disulfide bond" evidence="3">
    <location>
        <begin position="92"/>
        <end position="165"/>
    </location>
</feature>
<feature type="disulfide bond" evidence="3">
    <location>
        <begin position="148"/>
        <end position="162"/>
    </location>
</feature>
<feature type="disulfide bond" evidence="3">
    <location>
        <begin position="184"/>
        <end position="191"/>
    </location>
</feature>
<feature type="disulfide bond" evidence="3">
    <location>
        <begin position="187"/>
        <end position="196"/>
    </location>
</feature>
<feature type="disulfide bond" evidence="3">
    <location>
        <begin position="200"/>
        <end position="233"/>
    </location>
</feature>
<feature type="disulfide bond" evidence="3">
    <location>
        <begin position="209"/>
        <end position="227"/>
    </location>
</feature>
<feature type="disulfide bond" evidence="3">
    <location>
        <begin position="218"/>
        <end position="231"/>
    </location>
</feature>
<organism>
    <name type="scientific">Austrelaps superbus</name>
    <name type="common">Lowland copperhead snake</name>
    <name type="synonym">Hoplocephalus superbus</name>
    <dbReference type="NCBI Taxonomy" id="29156"/>
    <lineage>
        <taxon>Eukaryota</taxon>
        <taxon>Metazoa</taxon>
        <taxon>Chordata</taxon>
        <taxon>Craniata</taxon>
        <taxon>Vertebrata</taxon>
        <taxon>Euteleostomi</taxon>
        <taxon>Lepidosauria</taxon>
        <taxon>Squamata</taxon>
        <taxon>Bifurcata</taxon>
        <taxon>Unidentata</taxon>
        <taxon>Episquamata</taxon>
        <taxon>Toxicofera</taxon>
        <taxon>Serpentes</taxon>
        <taxon>Colubroidea</taxon>
        <taxon>Elapidae</taxon>
        <taxon>Hydrophiinae</taxon>
        <taxon>Austrelaps</taxon>
    </lineage>
</organism>
<dbReference type="EMBL" id="EF599322">
    <property type="protein sequence ID" value="ABW24178.1"/>
    <property type="molecule type" value="mRNA"/>
</dbReference>
<dbReference type="SMR" id="A8S6B6"/>
<dbReference type="GO" id="GO:0005576">
    <property type="term" value="C:extracellular region"/>
    <property type="evidence" value="ECO:0007669"/>
    <property type="project" value="UniProtKB-SubCell"/>
</dbReference>
<dbReference type="GO" id="GO:0005246">
    <property type="term" value="F:calcium channel regulator activity"/>
    <property type="evidence" value="ECO:0007669"/>
    <property type="project" value="UniProtKB-KW"/>
</dbReference>
<dbReference type="GO" id="GO:0090729">
    <property type="term" value="F:toxin activity"/>
    <property type="evidence" value="ECO:0007669"/>
    <property type="project" value="UniProtKB-KW"/>
</dbReference>
<dbReference type="CDD" id="cd05383">
    <property type="entry name" value="CAP_CRISP"/>
    <property type="match status" value="1"/>
</dbReference>
<dbReference type="FunFam" id="1.10.10.740:FF:000001">
    <property type="entry name" value="Cysteine-rich secretory protein 2"/>
    <property type="match status" value="1"/>
</dbReference>
<dbReference type="FunFam" id="3.40.33.10:FF:000005">
    <property type="entry name" value="Cysteine-rich secretory protein 2"/>
    <property type="match status" value="1"/>
</dbReference>
<dbReference type="Gene3D" id="3.40.33.10">
    <property type="entry name" value="CAP"/>
    <property type="match status" value="1"/>
</dbReference>
<dbReference type="Gene3D" id="1.10.10.740">
    <property type="entry name" value="Crisp domain"/>
    <property type="match status" value="1"/>
</dbReference>
<dbReference type="InterPro" id="IPR018244">
    <property type="entry name" value="Allrgn_V5/Tpx1_CS"/>
</dbReference>
<dbReference type="InterPro" id="IPR014044">
    <property type="entry name" value="CAP_dom"/>
</dbReference>
<dbReference type="InterPro" id="IPR035940">
    <property type="entry name" value="CAP_sf"/>
</dbReference>
<dbReference type="InterPro" id="IPR042076">
    <property type="entry name" value="Crisp-like_dom"/>
</dbReference>
<dbReference type="InterPro" id="IPR001283">
    <property type="entry name" value="CRISP-related"/>
</dbReference>
<dbReference type="InterPro" id="IPR013871">
    <property type="entry name" value="Cysteine_rich_secretory"/>
</dbReference>
<dbReference type="InterPro" id="IPR034117">
    <property type="entry name" value="SCP_CRISP"/>
</dbReference>
<dbReference type="InterPro" id="IPR003582">
    <property type="entry name" value="ShKT_dom"/>
</dbReference>
<dbReference type="PANTHER" id="PTHR10334">
    <property type="entry name" value="CYSTEINE-RICH SECRETORY PROTEIN-RELATED"/>
    <property type="match status" value="1"/>
</dbReference>
<dbReference type="Pfam" id="PF00188">
    <property type="entry name" value="CAP"/>
    <property type="match status" value="1"/>
</dbReference>
<dbReference type="Pfam" id="PF08562">
    <property type="entry name" value="Crisp"/>
    <property type="match status" value="1"/>
</dbReference>
<dbReference type="PRINTS" id="PR00837">
    <property type="entry name" value="V5TPXLIKE"/>
</dbReference>
<dbReference type="SMART" id="SM00198">
    <property type="entry name" value="SCP"/>
    <property type="match status" value="1"/>
</dbReference>
<dbReference type="SUPFAM" id="SSF57546">
    <property type="entry name" value="Crisp domain-like"/>
    <property type="match status" value="1"/>
</dbReference>
<dbReference type="SUPFAM" id="SSF55797">
    <property type="entry name" value="PR-1-like"/>
    <property type="match status" value="1"/>
</dbReference>
<dbReference type="PROSITE" id="PS01009">
    <property type="entry name" value="CRISP_1"/>
    <property type="match status" value="1"/>
</dbReference>
<dbReference type="PROSITE" id="PS01010">
    <property type="entry name" value="CRISP_2"/>
    <property type="match status" value="1"/>
</dbReference>
<dbReference type="PROSITE" id="PS51670">
    <property type="entry name" value="SHKT"/>
    <property type="match status" value="1"/>
</dbReference>
<protein>
    <recommendedName>
        <fullName>Cysteine-rich venom protein</fullName>
        <shortName>CRVP</shortName>
    </recommendedName>
    <alternativeName>
        <fullName>Cysteine-rich secretory protein</fullName>
        <shortName>CRISP</shortName>
    </alternativeName>
</protein>